<keyword id="KW-0325">Glycoprotein</keyword>
<keyword id="KW-0472">Membrane</keyword>
<keyword id="KW-1267">Proteomics identification</keyword>
<keyword id="KW-1185">Reference proteome</keyword>
<keyword id="KW-0732">Signal</keyword>
<keyword id="KW-0812">Transmembrane</keyword>
<keyword id="KW-1133">Transmembrane helix</keyword>
<reference key="1">
    <citation type="journal article" date="2004" name="Nat. Genet.">
        <title>Complete sequencing and characterization of 21,243 full-length human cDNAs.</title>
        <authorList>
            <person name="Ota T."/>
            <person name="Suzuki Y."/>
            <person name="Nishikawa T."/>
            <person name="Otsuki T."/>
            <person name="Sugiyama T."/>
            <person name="Irie R."/>
            <person name="Wakamatsu A."/>
            <person name="Hayashi K."/>
            <person name="Sato H."/>
            <person name="Nagai K."/>
            <person name="Kimura K."/>
            <person name="Makita H."/>
            <person name="Sekine M."/>
            <person name="Obayashi M."/>
            <person name="Nishi T."/>
            <person name="Shibahara T."/>
            <person name="Tanaka T."/>
            <person name="Ishii S."/>
            <person name="Yamamoto J."/>
            <person name="Saito K."/>
            <person name="Kawai Y."/>
            <person name="Isono Y."/>
            <person name="Nakamura Y."/>
            <person name="Nagahari K."/>
            <person name="Murakami K."/>
            <person name="Yasuda T."/>
            <person name="Iwayanagi T."/>
            <person name="Wagatsuma M."/>
            <person name="Shiratori A."/>
            <person name="Sudo H."/>
            <person name="Hosoiri T."/>
            <person name="Kaku Y."/>
            <person name="Kodaira H."/>
            <person name="Kondo H."/>
            <person name="Sugawara M."/>
            <person name="Takahashi M."/>
            <person name="Kanda K."/>
            <person name="Yokoi T."/>
            <person name="Furuya T."/>
            <person name="Kikkawa E."/>
            <person name="Omura Y."/>
            <person name="Abe K."/>
            <person name="Kamihara K."/>
            <person name="Katsuta N."/>
            <person name="Sato K."/>
            <person name="Tanikawa M."/>
            <person name="Yamazaki M."/>
            <person name="Ninomiya K."/>
            <person name="Ishibashi T."/>
            <person name="Yamashita H."/>
            <person name="Murakawa K."/>
            <person name="Fujimori K."/>
            <person name="Tanai H."/>
            <person name="Kimata M."/>
            <person name="Watanabe M."/>
            <person name="Hiraoka S."/>
            <person name="Chiba Y."/>
            <person name="Ishida S."/>
            <person name="Ono Y."/>
            <person name="Takiguchi S."/>
            <person name="Watanabe S."/>
            <person name="Yosida M."/>
            <person name="Hotuta T."/>
            <person name="Kusano J."/>
            <person name="Kanehori K."/>
            <person name="Takahashi-Fujii A."/>
            <person name="Hara H."/>
            <person name="Tanase T.-O."/>
            <person name="Nomura Y."/>
            <person name="Togiya S."/>
            <person name="Komai F."/>
            <person name="Hara R."/>
            <person name="Takeuchi K."/>
            <person name="Arita M."/>
            <person name="Imose N."/>
            <person name="Musashino K."/>
            <person name="Yuuki H."/>
            <person name="Oshima A."/>
            <person name="Sasaki N."/>
            <person name="Aotsuka S."/>
            <person name="Yoshikawa Y."/>
            <person name="Matsunawa H."/>
            <person name="Ichihara T."/>
            <person name="Shiohata N."/>
            <person name="Sano S."/>
            <person name="Moriya S."/>
            <person name="Momiyama H."/>
            <person name="Satoh N."/>
            <person name="Takami S."/>
            <person name="Terashima Y."/>
            <person name="Suzuki O."/>
            <person name="Nakagawa S."/>
            <person name="Senoh A."/>
            <person name="Mizoguchi H."/>
            <person name="Goto Y."/>
            <person name="Shimizu F."/>
            <person name="Wakebe H."/>
            <person name="Hishigaki H."/>
            <person name="Watanabe T."/>
            <person name="Sugiyama A."/>
            <person name="Takemoto M."/>
            <person name="Kawakami B."/>
            <person name="Yamazaki M."/>
            <person name="Watanabe K."/>
            <person name="Kumagai A."/>
            <person name="Itakura S."/>
            <person name="Fukuzumi Y."/>
            <person name="Fujimori Y."/>
            <person name="Komiyama M."/>
            <person name="Tashiro H."/>
            <person name="Tanigami A."/>
            <person name="Fujiwara T."/>
            <person name="Ono T."/>
            <person name="Yamada K."/>
            <person name="Fujii Y."/>
            <person name="Ozaki K."/>
            <person name="Hirao M."/>
            <person name="Ohmori Y."/>
            <person name="Kawabata A."/>
            <person name="Hikiji T."/>
            <person name="Kobatake N."/>
            <person name="Inagaki H."/>
            <person name="Ikema Y."/>
            <person name="Okamoto S."/>
            <person name="Okitani R."/>
            <person name="Kawakami T."/>
            <person name="Noguchi S."/>
            <person name="Itoh T."/>
            <person name="Shigeta K."/>
            <person name="Senba T."/>
            <person name="Matsumura K."/>
            <person name="Nakajima Y."/>
            <person name="Mizuno T."/>
            <person name="Morinaga M."/>
            <person name="Sasaki M."/>
            <person name="Togashi T."/>
            <person name="Oyama M."/>
            <person name="Hata H."/>
            <person name="Watanabe M."/>
            <person name="Komatsu T."/>
            <person name="Mizushima-Sugano J."/>
            <person name="Satoh T."/>
            <person name="Shirai Y."/>
            <person name="Takahashi Y."/>
            <person name="Nakagawa K."/>
            <person name="Okumura K."/>
            <person name="Nagase T."/>
            <person name="Nomura N."/>
            <person name="Kikuchi H."/>
            <person name="Masuho Y."/>
            <person name="Yamashita R."/>
            <person name="Nakai K."/>
            <person name="Yada T."/>
            <person name="Nakamura Y."/>
            <person name="Ohara O."/>
            <person name="Isogai T."/>
            <person name="Sugano S."/>
        </authorList>
    </citation>
    <scope>NUCLEOTIDE SEQUENCE [LARGE SCALE MRNA]</scope>
    <source>
        <tissue>Kidney</tissue>
    </source>
</reference>
<reference key="2">
    <citation type="journal article" date="2006" name="Nature">
        <title>Human chromosome 11 DNA sequence and analysis including novel gene identification.</title>
        <authorList>
            <person name="Taylor T.D."/>
            <person name="Noguchi H."/>
            <person name="Totoki Y."/>
            <person name="Toyoda A."/>
            <person name="Kuroki Y."/>
            <person name="Dewar K."/>
            <person name="Lloyd C."/>
            <person name="Itoh T."/>
            <person name="Takeda T."/>
            <person name="Kim D.-W."/>
            <person name="She X."/>
            <person name="Barlow K.F."/>
            <person name="Bloom T."/>
            <person name="Bruford E."/>
            <person name="Chang J.L."/>
            <person name="Cuomo C.A."/>
            <person name="Eichler E."/>
            <person name="FitzGerald M.G."/>
            <person name="Jaffe D.B."/>
            <person name="LaButti K."/>
            <person name="Nicol R."/>
            <person name="Park H.-S."/>
            <person name="Seaman C."/>
            <person name="Sougnez C."/>
            <person name="Yang X."/>
            <person name="Zimmer A.R."/>
            <person name="Zody M.C."/>
            <person name="Birren B.W."/>
            <person name="Nusbaum C."/>
            <person name="Fujiyama A."/>
            <person name="Hattori M."/>
            <person name="Rogers J."/>
            <person name="Lander E.S."/>
            <person name="Sakaki Y."/>
        </authorList>
    </citation>
    <scope>NUCLEOTIDE SEQUENCE [LARGE SCALE GENOMIC DNA]</scope>
</reference>
<reference key="3">
    <citation type="submission" date="2005-07" db="EMBL/GenBank/DDBJ databases">
        <authorList>
            <person name="Mural R.J."/>
            <person name="Istrail S."/>
            <person name="Sutton G.G."/>
            <person name="Florea L."/>
            <person name="Halpern A.L."/>
            <person name="Mobarry C.M."/>
            <person name="Lippert R."/>
            <person name="Walenz B."/>
            <person name="Shatkay H."/>
            <person name="Dew I."/>
            <person name="Miller J.R."/>
            <person name="Flanigan M.J."/>
            <person name="Edwards N.J."/>
            <person name="Bolanos R."/>
            <person name="Fasulo D."/>
            <person name="Halldorsson B.V."/>
            <person name="Hannenhalli S."/>
            <person name="Turner R."/>
            <person name="Yooseph S."/>
            <person name="Lu F."/>
            <person name="Nusskern D.R."/>
            <person name="Shue B.C."/>
            <person name="Zheng X.H."/>
            <person name="Zhong F."/>
            <person name="Delcher A.L."/>
            <person name="Huson D.H."/>
            <person name="Kravitz S.A."/>
            <person name="Mouchard L."/>
            <person name="Reinert K."/>
            <person name="Remington K.A."/>
            <person name="Clark A.G."/>
            <person name="Waterman M.S."/>
            <person name="Eichler E.E."/>
            <person name="Adams M.D."/>
            <person name="Hunkapiller M.W."/>
            <person name="Myers E.W."/>
            <person name="Venter J.C."/>
        </authorList>
    </citation>
    <scope>NUCLEOTIDE SEQUENCE [LARGE SCALE GENOMIC DNA]</scope>
</reference>
<reference key="4">
    <citation type="journal article" date="2004" name="Genome Res.">
        <title>The status, quality, and expansion of the NIH full-length cDNA project: the Mammalian Gene Collection (MGC).</title>
        <authorList>
            <consortium name="The MGC Project Team"/>
        </authorList>
    </citation>
    <scope>NUCLEOTIDE SEQUENCE [LARGE SCALE MRNA]</scope>
    <source>
        <tissue>Brain</tissue>
    </source>
</reference>
<dbReference type="EMBL" id="AK303693">
    <property type="protein sequence ID" value="BAG64681.1"/>
    <property type="molecule type" value="mRNA"/>
</dbReference>
<dbReference type="EMBL" id="AP000775">
    <property type="status" value="NOT_ANNOTATED_CDS"/>
    <property type="molecule type" value="Genomic_DNA"/>
</dbReference>
<dbReference type="EMBL" id="CH471065">
    <property type="protein sequence ID" value="EAW67125.1"/>
    <property type="molecule type" value="Genomic_DNA"/>
</dbReference>
<dbReference type="EMBL" id="BC068577">
    <property type="protein sequence ID" value="AAH68577.1"/>
    <property type="molecule type" value="mRNA"/>
</dbReference>
<dbReference type="CCDS" id="CCDS31672.1"/>
<dbReference type="RefSeq" id="NP_997528.2">
    <property type="nucleotide sequence ID" value="NM_207645.4"/>
</dbReference>
<dbReference type="RefSeq" id="XP_011541120.1">
    <property type="nucleotide sequence ID" value="XM_011542818.3"/>
</dbReference>
<dbReference type="RefSeq" id="XP_054224739.1">
    <property type="nucleotide sequence ID" value="XM_054368764.1"/>
</dbReference>
<dbReference type="SMR" id="Q6NUJ2"/>
<dbReference type="BioGRID" id="134460">
    <property type="interactions" value="67"/>
</dbReference>
<dbReference type="FunCoup" id="Q6NUJ2">
    <property type="interactions" value="63"/>
</dbReference>
<dbReference type="IntAct" id="Q6NUJ2">
    <property type="interactions" value="55"/>
</dbReference>
<dbReference type="STRING" id="9606.ENSP00000331581"/>
<dbReference type="GlyCosmos" id="Q6NUJ2">
    <property type="glycosylation" value="1 site, No reported glycans"/>
</dbReference>
<dbReference type="GlyGen" id="Q6NUJ2">
    <property type="glycosylation" value="2 sites, 3 N-linked glycans (1 site)"/>
</dbReference>
<dbReference type="PhosphoSitePlus" id="Q6NUJ2"/>
<dbReference type="BioMuta" id="C11orf87"/>
<dbReference type="DMDM" id="296434450"/>
<dbReference type="MassIVE" id="Q6NUJ2"/>
<dbReference type="PaxDb" id="9606-ENSP00000331581"/>
<dbReference type="PeptideAtlas" id="Q6NUJ2"/>
<dbReference type="ProteomicsDB" id="66683"/>
<dbReference type="Antibodypedia" id="32002">
    <property type="antibodies" value="24 antibodies from 13 providers"/>
</dbReference>
<dbReference type="DNASU" id="399947"/>
<dbReference type="Ensembl" id="ENST00000327419.7">
    <property type="protein sequence ID" value="ENSP00000331581.6"/>
    <property type="gene ID" value="ENSG00000185742.7"/>
</dbReference>
<dbReference type="GeneID" id="399947"/>
<dbReference type="KEGG" id="hsa:399947"/>
<dbReference type="MANE-Select" id="ENST00000327419.7">
    <property type="protein sequence ID" value="ENSP00000331581.6"/>
    <property type="RefSeq nucleotide sequence ID" value="NM_207645.4"/>
    <property type="RefSeq protein sequence ID" value="NP_997528.2"/>
</dbReference>
<dbReference type="UCSC" id="uc010rwb.3">
    <property type="organism name" value="human"/>
</dbReference>
<dbReference type="AGR" id="HGNC:33788"/>
<dbReference type="CTD" id="399947"/>
<dbReference type="DisGeNET" id="399947"/>
<dbReference type="GeneCards" id="C11orf87"/>
<dbReference type="HGNC" id="HGNC:33788">
    <property type="gene designation" value="C11orf87"/>
</dbReference>
<dbReference type="HPA" id="ENSG00000185742">
    <property type="expression patterns" value="Tissue enriched (brain)"/>
</dbReference>
<dbReference type="neXtProt" id="NX_Q6NUJ2"/>
<dbReference type="OpenTargets" id="ENSG00000185742"/>
<dbReference type="PharmGKB" id="PA162377822"/>
<dbReference type="VEuPathDB" id="HostDB:ENSG00000185742"/>
<dbReference type="eggNOG" id="ENOG502S981">
    <property type="taxonomic scope" value="Eukaryota"/>
</dbReference>
<dbReference type="GeneTree" id="ENSGT00390000012905"/>
<dbReference type="HOGENOM" id="CLU_074982_0_0_1"/>
<dbReference type="InParanoid" id="Q6NUJ2"/>
<dbReference type="OMA" id="YERDHCT"/>
<dbReference type="OrthoDB" id="9943854at2759"/>
<dbReference type="PAN-GO" id="Q6NUJ2">
    <property type="GO annotations" value="0 GO annotations based on evolutionary models"/>
</dbReference>
<dbReference type="PhylomeDB" id="Q6NUJ2"/>
<dbReference type="TreeFam" id="TF336990"/>
<dbReference type="PathwayCommons" id="Q6NUJ2"/>
<dbReference type="SignaLink" id="Q6NUJ2"/>
<dbReference type="BioGRID-ORCS" id="399947">
    <property type="hits" value="15 hits in 1126 CRISPR screens"/>
</dbReference>
<dbReference type="ChiTaRS" id="C11orf87">
    <property type="organism name" value="human"/>
</dbReference>
<dbReference type="GenomeRNAi" id="399947"/>
<dbReference type="Pharos" id="Q6NUJ2">
    <property type="development level" value="Tdark"/>
</dbReference>
<dbReference type="PRO" id="PR:Q6NUJ2"/>
<dbReference type="Proteomes" id="UP000005640">
    <property type="component" value="Chromosome 11"/>
</dbReference>
<dbReference type="RNAct" id="Q6NUJ2">
    <property type="molecule type" value="protein"/>
</dbReference>
<dbReference type="Bgee" id="ENSG00000185742">
    <property type="expression patterns" value="Expressed in endothelial cell and 77 other cell types or tissues"/>
</dbReference>
<dbReference type="ExpressionAtlas" id="Q6NUJ2">
    <property type="expression patterns" value="baseline and differential"/>
</dbReference>
<dbReference type="GO" id="GO:0016020">
    <property type="term" value="C:membrane"/>
    <property type="evidence" value="ECO:0007669"/>
    <property type="project" value="UniProtKB-SubCell"/>
</dbReference>
<dbReference type="InterPro" id="IPR037670">
    <property type="entry name" value="C11orf87"/>
</dbReference>
<dbReference type="PANTHER" id="PTHR31870:SF2">
    <property type="entry name" value="CHROMOSOME 11 OPEN READING FRAME 87"/>
    <property type="match status" value="1"/>
</dbReference>
<dbReference type="PANTHER" id="PTHR31870">
    <property type="entry name" value="SI:DKEY-183I3.9-RELATED"/>
    <property type="match status" value="1"/>
</dbReference>
<feature type="signal peptide" evidence="1">
    <location>
        <begin position="1"/>
        <end position="23"/>
    </location>
</feature>
<feature type="chain" id="PRO_0000320195" description="Uncharacterized protein C11orf87">
    <location>
        <begin position="24"/>
        <end position="197"/>
    </location>
</feature>
<feature type="topological domain" description="Extracellular" evidence="1">
    <location>
        <begin position="24"/>
        <end position="61"/>
    </location>
</feature>
<feature type="transmembrane region" description="Helical" evidence="1">
    <location>
        <begin position="62"/>
        <end position="82"/>
    </location>
</feature>
<feature type="topological domain" description="Cytoplasmic" evidence="1">
    <location>
        <begin position="83"/>
        <end position="197"/>
    </location>
</feature>
<feature type="region of interest" description="Disordered" evidence="2">
    <location>
        <begin position="94"/>
        <end position="180"/>
    </location>
</feature>
<feature type="compositionally biased region" description="Basic and acidic residues" evidence="2">
    <location>
        <begin position="96"/>
        <end position="107"/>
    </location>
</feature>
<feature type="compositionally biased region" description="Basic and acidic residues" evidence="2">
    <location>
        <begin position="125"/>
        <end position="136"/>
    </location>
</feature>
<feature type="compositionally biased region" description="Low complexity" evidence="2">
    <location>
        <begin position="141"/>
        <end position="161"/>
    </location>
</feature>
<feature type="compositionally biased region" description="Pro residues" evidence="2">
    <location>
        <begin position="162"/>
        <end position="171"/>
    </location>
</feature>
<feature type="glycosylation site" description="N-linked (GlcNAc...) asparagine" evidence="1">
    <location>
        <position position="26"/>
    </location>
</feature>
<feature type="sequence conflict" description="In Ref. 4; AAH68577." evidence="3" ref="4">
    <original>L</original>
    <variation>V</variation>
    <location>
        <position position="70"/>
    </location>
</feature>
<comment type="interaction">
    <interactant intactId="EBI-6660291">
        <id>Q6NUJ2</id>
    </interactant>
    <interactant intactId="EBI-3904822">
        <id>P48745</id>
        <label>CCN3</label>
    </interactant>
    <organismsDiffer>false</organismsDiffer>
    <experiments>3</experiments>
</comment>
<comment type="interaction">
    <interactant intactId="EBI-6660291">
        <id>Q6NUJ2</id>
    </interactant>
    <interactant intactId="EBI-3867333">
        <id>A8MQ03</id>
        <label>CYSRT1</label>
    </interactant>
    <organismsDiffer>false</organismsDiffer>
    <experiments>3</experiments>
</comment>
<comment type="interaction">
    <interactant intactId="EBI-6660291">
        <id>Q6NUJ2</id>
    </interactant>
    <interactant intactId="EBI-1047093">
        <id>O76011</id>
        <label>KRT34</label>
    </interactant>
    <organismsDiffer>false</organismsDiffer>
    <experiments>3</experiments>
</comment>
<comment type="interaction">
    <interactant intactId="EBI-6660291">
        <id>Q6NUJ2</id>
    </interactant>
    <interactant intactId="EBI-10171697">
        <id>Q6A162</id>
        <label>KRT40</label>
    </interactant>
    <organismsDiffer>false</organismsDiffer>
    <experiments>3</experiments>
</comment>
<comment type="interaction">
    <interactant intactId="EBI-6660291">
        <id>Q6NUJ2</id>
    </interactant>
    <interactant intactId="EBI-10221390">
        <id>P78385</id>
        <label>KRT83</label>
    </interactant>
    <organismsDiffer>false</organismsDiffer>
    <experiments>3</experiments>
</comment>
<comment type="interaction">
    <interactant intactId="EBI-6660291">
        <id>Q6NUJ2</id>
    </interactant>
    <interactant intactId="EBI-11959885">
        <id>Q07627</id>
        <label>KRTAP1-1</label>
    </interactant>
    <organismsDiffer>false</organismsDiffer>
    <experiments>3</experiments>
</comment>
<comment type="interaction">
    <interactant intactId="EBI-6660291">
        <id>Q6NUJ2</id>
    </interactant>
    <interactant intactId="EBI-10172150">
        <id>P60370</id>
        <label>KRTAP10-5</label>
    </interactant>
    <organismsDiffer>false</organismsDiffer>
    <experiments>3</experiments>
</comment>
<comment type="interaction">
    <interactant intactId="EBI-6660291">
        <id>Q6NUJ2</id>
    </interactant>
    <interactant intactId="EBI-10171774">
        <id>P60410</id>
        <label>KRTAP10-8</label>
    </interactant>
    <organismsDiffer>false</organismsDiffer>
    <experiments>6</experiments>
</comment>
<comment type="interaction">
    <interactant intactId="EBI-6660291">
        <id>Q6NUJ2</id>
    </interactant>
    <interactant intactId="EBI-10172052">
        <id>P60411</id>
        <label>KRTAP10-9</label>
    </interactant>
    <organismsDiffer>false</organismsDiffer>
    <experiments>3</experiments>
</comment>
<comment type="interaction">
    <interactant intactId="EBI-6660291">
        <id>Q6NUJ2</id>
    </interactant>
    <interactant intactId="EBI-11953334">
        <id>P60328</id>
        <label>KRTAP12-3</label>
    </interactant>
    <organismsDiffer>false</organismsDiffer>
    <experiments>3</experiments>
</comment>
<comment type="interaction">
    <interactant intactId="EBI-6660291">
        <id>Q6NUJ2</id>
    </interactant>
    <interactant intactId="EBI-12811111">
        <id>Q8IUB9</id>
        <label>KRTAP19-1</label>
    </interactant>
    <organismsDiffer>false</organismsDiffer>
    <experiments>3</experiments>
</comment>
<comment type="interaction">
    <interactant intactId="EBI-6660291">
        <id>Q6NUJ2</id>
    </interactant>
    <interactant intactId="EBI-14065470">
        <id>Q9BYR9</id>
        <label>KRTAP2-4</label>
    </interactant>
    <organismsDiffer>false</organismsDiffer>
    <experiments>3</experiments>
</comment>
<comment type="interaction">
    <interactant intactId="EBI-6660291">
        <id>Q6NUJ2</id>
    </interactant>
    <interactant intactId="EBI-3958099">
        <id>P26371</id>
        <label>KRTAP5-9</label>
    </interactant>
    <organismsDiffer>false</organismsDiffer>
    <experiments>3</experiments>
</comment>
<comment type="interaction">
    <interactant intactId="EBI-6660291">
        <id>Q6NUJ2</id>
    </interactant>
    <interactant intactId="EBI-22311199">
        <id>Q3LI67</id>
        <label>KRTAP6-3</label>
    </interactant>
    <organismsDiffer>false</organismsDiffer>
    <experiments>3</experiments>
</comment>
<comment type="interaction">
    <interactant intactId="EBI-6660291">
        <id>Q6NUJ2</id>
    </interactant>
    <interactant intactId="EBI-945833">
        <id>Q7Z3S9</id>
        <label>NOTCH2NLA</label>
    </interactant>
    <organismsDiffer>false</organismsDiffer>
    <experiments>3</experiments>
</comment>
<comment type="interaction">
    <interactant intactId="EBI-6660291">
        <id>Q6NUJ2</id>
    </interactant>
    <interactant intactId="EBI-740322">
        <id>Q93062</id>
        <label>RBPMS</label>
    </interactant>
    <organismsDiffer>false</organismsDiffer>
    <experiments>3</experiments>
</comment>
<comment type="interaction">
    <interactant intactId="EBI-6660291">
        <id>Q6NUJ2</id>
    </interactant>
    <interactant intactId="EBI-740343">
        <id>Q93062-3</id>
        <label>RBPMS</label>
    </interactant>
    <organismsDiffer>false</organismsDiffer>
    <experiments>3</experiments>
</comment>
<comment type="interaction">
    <interactant intactId="EBI-6660291">
        <id>Q6NUJ2</id>
    </interactant>
    <interactant intactId="EBI-12806032">
        <id>Q16348</id>
        <label>SLC15A2</label>
    </interactant>
    <organismsDiffer>false</organismsDiffer>
    <experiments>3</experiments>
</comment>
<comment type="interaction">
    <interactant intactId="EBI-6660291">
        <id>Q6NUJ2</id>
    </interactant>
    <interactant intactId="EBI-949753">
        <id>Q63HR2</id>
        <label>TNS2</label>
    </interactant>
    <organismsDiffer>false</organismsDiffer>
    <experiments>3</experiments>
</comment>
<comment type="interaction">
    <interactant intactId="EBI-6660291">
        <id>Q6NUJ2</id>
    </interactant>
    <interactant intactId="EBI-742327">
        <id>Q15654</id>
        <label>TRIP6</label>
    </interactant>
    <organismsDiffer>false</organismsDiffer>
    <experiments>3</experiments>
</comment>
<comment type="interaction">
    <interactant intactId="EBI-6660291">
        <id>Q6NUJ2</id>
    </interactant>
    <interactant intactId="EBI-12040603">
        <id>Q9NZC7-5</id>
        <label>WWOX</label>
    </interactant>
    <organismsDiffer>false</organismsDiffer>
    <experiments>3</experiments>
</comment>
<comment type="subcellular location">
    <subcellularLocation>
        <location evidence="3">Membrane</location>
        <topology evidence="3">Single-pass type I membrane protein</topology>
    </subcellularLocation>
</comment>
<sequence>MSARAPKELRLALPPCLLNRTFASPNASGSGNTGARGPGAVGSGTCITQVGQQLFQSFSSTLVLIVLVTLIFCLIVLSLSTFHIHKRRMKKRKMQRAQEEYERDHCSGSRGGGGLPRPGRQAPTHAKETRLERQPRDSPFCAPSNASSLSSSSPGLPCQGPCAPPPPPPASSPQGAHAASSCLDTAGEGLLQTVVLS</sequence>
<evidence type="ECO:0000255" key="1"/>
<evidence type="ECO:0000256" key="2">
    <source>
        <dbReference type="SAM" id="MobiDB-lite"/>
    </source>
</evidence>
<evidence type="ECO:0000305" key="3"/>
<name>CK087_HUMAN</name>
<organism>
    <name type="scientific">Homo sapiens</name>
    <name type="common">Human</name>
    <dbReference type="NCBI Taxonomy" id="9606"/>
    <lineage>
        <taxon>Eukaryota</taxon>
        <taxon>Metazoa</taxon>
        <taxon>Chordata</taxon>
        <taxon>Craniata</taxon>
        <taxon>Vertebrata</taxon>
        <taxon>Euteleostomi</taxon>
        <taxon>Mammalia</taxon>
        <taxon>Eutheria</taxon>
        <taxon>Euarchontoglires</taxon>
        <taxon>Primates</taxon>
        <taxon>Haplorrhini</taxon>
        <taxon>Catarrhini</taxon>
        <taxon>Hominidae</taxon>
        <taxon>Homo</taxon>
    </lineage>
</organism>
<accession>Q6NUJ2</accession>
<accession>B4E169</accession>
<gene>
    <name type="primary">C11orf87</name>
</gene>
<protein>
    <recommendedName>
        <fullName>Uncharacterized protein C11orf87</fullName>
    </recommendedName>
</protein>
<proteinExistence type="evidence at protein level"/>